<organism>
    <name type="scientific">Human immunodeficiency virus type 1 group M subtype C (isolate 92BR025)</name>
    <name type="common">HIV-1</name>
    <dbReference type="NCBI Taxonomy" id="388812"/>
    <lineage>
        <taxon>Viruses</taxon>
        <taxon>Riboviria</taxon>
        <taxon>Pararnavirae</taxon>
        <taxon>Artverviricota</taxon>
        <taxon>Revtraviricetes</taxon>
        <taxon>Ortervirales</taxon>
        <taxon>Retroviridae</taxon>
        <taxon>Orthoretrovirinae</taxon>
        <taxon>Lentivirus</taxon>
        <taxon>Human immunodeficiency virus type 1</taxon>
    </lineage>
</organism>
<organismHost>
    <name type="scientific">Homo sapiens</name>
    <name type="common">Human</name>
    <dbReference type="NCBI Taxonomy" id="9606"/>
</organismHost>
<proteinExistence type="inferred from homology"/>
<keyword id="KW-0014">AIDS</keyword>
<keyword id="KW-0053">Apoptosis</keyword>
<keyword id="KW-0244">Early protein</keyword>
<keyword id="KW-1032">Host cell membrane</keyword>
<keyword id="KW-1040">Host Golgi apparatus</keyword>
<keyword id="KW-1043">Host membrane</keyword>
<keyword id="KW-0945">Host-virus interaction</keyword>
<keyword id="KW-1080">Inhibition of host adaptive immune response by virus</keyword>
<keyword id="KW-1083">Inhibition of host autophagy by virus</keyword>
<keyword id="KW-1115">Inhibition of host MHC class I molecule presentation by virus</keyword>
<keyword id="KW-1116">Inhibition of host MHC class II molecule presentation by virus</keyword>
<keyword id="KW-0449">Lipoprotein</keyword>
<keyword id="KW-0472">Membrane</keyword>
<keyword id="KW-0519">Myristate</keyword>
<keyword id="KW-0597">Phosphoprotein</keyword>
<keyword id="KW-1185">Reference proteome</keyword>
<keyword id="KW-0964">Secreted</keyword>
<keyword id="KW-0729">SH3-binding</keyword>
<keyword id="KW-0899">Viral immunoevasion</keyword>
<keyword id="KW-0946">Virion</keyword>
<keyword id="KW-0843">Virulence</keyword>
<reference key="1">
    <citation type="journal article" date="1996" name="J. Virol.">
        <title>Molecular cloning and analysis of functional envelope genes from human immunodeficiency virus type 1 sequence subtypes A through G. The WHO and NIAID Networks for HIV Isolation and Characterization.</title>
        <authorList>
            <person name="Gao F."/>
            <person name="Morrison S.G."/>
            <person name="Robertson D.L."/>
            <person name="Thornton C.L."/>
            <person name="Craig S."/>
            <person name="Karlsson G."/>
            <person name="Sodroski J."/>
            <person name="Morgado M."/>
            <person name="Galvao-Castro B."/>
            <person name="von Briesen H."/>
            <person name="Beddows S."/>
            <person name="Weber J."/>
            <person name="Sharp P.M."/>
            <person name="Shaw G.M."/>
            <person name="Hahn B.H."/>
        </authorList>
    </citation>
    <scope>NUCLEOTIDE SEQUENCE [GENOMIC DNA]</scope>
</reference>
<comment type="function">
    <text evidence="1">Factor of infectivity and pathogenicity, required for optimal virus replication. Alters numerous pathways of T-lymphocyte function and down-regulates immunity surface molecules in order to evade host defense and increase viral infectivity. Alters the functionality of other immunity cells, like dendritic cells, monocytes/macrophages and NK cells.</text>
</comment>
<comment type="function">
    <text evidence="1">In infected CD4(+) T-lymphocytes, down-regulates the surface MHC-I, mature MHC-II, CD4, CD28, CCR5 and CXCR4 molecules. Mediates internalization and degradation of host CD4 through the interaction of with the cytoplasmic tail of CD4, the recruitment of AP-2 (clathrin adapter protein complex 2), internalization through clathrin coated pits, and subsequent transport to endosomes and lysosomes for degradation. Diverts host MHC-I molecules to the trans-Golgi network-associated endosomal compartments by an endocytic pathway to finally target them for degradation. MHC-I down-regulation may involve AP-1 (clathrin adapter protein complex 1) or possibly Src family kinase-ZAP70/Syk-PI3K cascade recruited by PACS2. In consequence infected cells are masked for immune recognition by cytotoxic T-lymphocytes. Decreasing the number of immune receptors also prevents reinfection by more HIV particles (superinfection). Down-regulates host SERINC3 and SERINC5 thereby excluding these proteins from the viral particles. Virion infectivity is drastically higher when SERINC3 or SERINC5 are excluded from the viral envelope, because these host antiviral proteins impair the membrane fusion event necessary for subsequent virion penetration.</text>
</comment>
<comment type="function">
    <text evidence="1">Bypasses host T-cell signaling by inducing a transcriptional program nearly identical to that of anti-CD3 cell activation. Interaction with TCR-zeta chain up-regulates the Fas ligand (FasL). Increasing surface FasL molecules and decreasing surface MHC-I molecules on infected CD4(+) cells send attacking cytotoxic CD8+ T-lymphocytes into apoptosis.</text>
</comment>
<comment type="function">
    <text evidence="1">Plays a role in optimizing the host cell environment for viral replication without causing cell death by apoptosis. Protects the infected cells from apoptosis in order to keep them alive until the next virus generation is ready to strike. Inhibits the Fas and TNFR-mediated death signals by blocking MAP3K5/ASK1. Decreases the half-life of TP53, protecting the infected cell against p53-mediated apoptosis. Inhibits the apoptotic signals regulated by the Bcl-2 family proteins through the formation of a Nef/PI3-kinase/PAK2 complex that leads to activation of PAK2 and induces phosphorylation of host BAD.</text>
</comment>
<comment type="function">
    <text evidence="1">Extracellular Nef protein targets CD4(+) T-lymphocytes for apoptosis by interacting with CXCR4 surface receptors.</text>
</comment>
<comment type="subunit">
    <text evidence="1">Monomer; cytosolic form. Homodimer; membrane bound form. Interacts with Nef associated p21-activated kinase (PAK2); this interaction activates PAK2. Associates with the Nef-MHC-I-AP1 complex; this complex is required for MHC-I internalization. Interacts (via C-terminus) with host PI3-kinase. Interacts with host PACS1; this interaction seems to be weak. Interacts with host PACS2. Interacts with host LCK and MAPK3; these interactions inhibit the kinase activity of the latter. Interacts with host ATP6V1H; this interaction may play a role in CD4 endocytosis. Associates with the CD4-Nef-AP2 complex; this complex is required for CD4 internalization. Interacts with host AP2 subunit alpha and AP2 subunit sigma2. Interacts with TCR-zeta chain; this interaction up-regulates the Fas ligand (FasL) surface expression. Interacts with host HCK, LYN, and SRC; these interactions activate the Src family kinases. Interacts with MAP3K5; this interaction inhibits the Fas and TNFR-mediated death signals. Interacts with beta-COP and PTE1. Interacts with human RACK1; this increases Nef phosphorylation by PKC. Interacts with TP53; this interaction decreases the half-life of TP53, protecting the infected cell against p53-mediated apoptosis.</text>
</comment>
<comment type="subcellular location">
    <subcellularLocation>
        <location evidence="1">Host cell membrane</location>
        <topology evidence="1">Lipid-anchor</topology>
        <orientation evidence="1">Cytoplasmic side</orientation>
    </subcellularLocation>
    <subcellularLocation>
        <location evidence="1">Virion</location>
    </subcellularLocation>
    <subcellularLocation>
        <location evidence="1">Secreted</location>
    </subcellularLocation>
    <subcellularLocation>
        <location evidence="1">Host Golgi apparatus membrane</location>
    </subcellularLocation>
    <text evidence="1">TGN localization requires PACS1. Associates with the inner plasma membrane through its N-terminal domain. Nef stimulates its own export via the release of exosomes. Incorporated in virions at a rate of about 10 molecules per virion, where it is cleaved.</text>
</comment>
<comment type="induction">
    <text evidence="1">Expressed early in the viral replication cycle.</text>
</comment>
<comment type="domain">
    <text evidence="1">The N-terminal domain is composed of the N-myristoyl glycine and of a cluster of positively charged amino acids. It is required for inner plasma membrane targeting of Nef and virion incorporation, and thereby for infectivity. This domain is also involved in binding to TP53.</text>
</comment>
<comment type="domain">
    <text evidence="1">The SH3-binding domain constituted of PxxP motifs mediates binding to several Src family proteins thereby regulating their tyrosine kinase activity. The same motifs also mediates the association with MAPK3, PI3-kinase and TCR-zeta.</text>
</comment>
<comment type="domain">
    <text evidence="1">The dileucine internalization motif and a diacidic motif seem to be required for binding to AP-2.</text>
</comment>
<comment type="domain">
    <text evidence="1">The acidic region binds to the sorting protein PACS-2, which targets Nef to the paranuclear region, enabling the PxxP motif to direct assembly of an SFK/ZAP-70/PI3K complex that accelerates endocytosis of cell-surface MHC-I.</text>
</comment>
<comment type="PTM">
    <text evidence="1">The virion-associated Nef proteins are cleaved by the viral protease to release the soluble C-terminal core protein. Nef is probably cleaved concomitantly with viral structural proteins on maturation of virus particles.</text>
</comment>
<comment type="PTM">
    <text evidence="1">Myristoylated.</text>
</comment>
<comment type="PTM">
    <text evidence="1">Phosphorylated on serine residues, probably by host PKCdelta and theta.</text>
</comment>
<comment type="miscellaneous">
    <text evidence="1">HIV-1 lineages are divided in three main groups, M (for Major), O (for Outlier), and N (for New, or Non-M, Non-O). The vast majority of strains found worldwide belong to the group M. Group O seems to be endemic to and largely confined to Cameroon and neighboring countries in West Central Africa, where these viruses represent a small minority of HIV-1 strains. The group N is represented by a limited number of isolates from Cameroonian persons. The group M is further subdivided in 9 clades or subtypes (A to D, F to H, J and K).</text>
</comment>
<comment type="similarity">
    <text evidence="1">Belongs to the lentivirus primate group Nef protein family.</text>
</comment>
<evidence type="ECO:0000255" key="1">
    <source>
        <dbReference type="HAMAP-Rule" id="MF_04078"/>
    </source>
</evidence>
<evidence type="ECO:0000256" key="2">
    <source>
        <dbReference type="SAM" id="MobiDB-lite"/>
    </source>
</evidence>
<accession>O12165</accession>
<name>NEF_HV192</name>
<gene>
    <name evidence="1" type="primary">nef</name>
</gene>
<sequence length="206" mass="23511">MGNKWSKCSTVGRPAIRERMRRAPAAEGVGPASQDSDKYGALTSSSTPANNADCAWLEAQQEEEEVGFPVRPQVPLRPMTYKAVVDLSFFLEEKGGLEGLIYSKKRQDILDLWVYNTQGYFPDWQNYTPGPGVRFPLTFGWCFKLVPVDPREVEEANTGENNSLLHPMSLHGMEDSHREVLQWKFDSLLARRHMARELHPEYYKDC</sequence>
<dbReference type="EMBL" id="U52953">
    <property type="protein sequence ID" value="AAB61125.1"/>
    <property type="molecule type" value="Genomic_DNA"/>
</dbReference>
<dbReference type="SMR" id="O12165"/>
<dbReference type="Proteomes" id="UP000007686">
    <property type="component" value="Segment"/>
</dbReference>
<dbReference type="GO" id="GO:0005576">
    <property type="term" value="C:extracellular region"/>
    <property type="evidence" value="ECO:0007669"/>
    <property type="project" value="UniProtKB-SubCell"/>
</dbReference>
<dbReference type="GO" id="GO:0044178">
    <property type="term" value="C:host cell Golgi membrane"/>
    <property type="evidence" value="ECO:0007669"/>
    <property type="project" value="UniProtKB-SubCell"/>
</dbReference>
<dbReference type="GO" id="GO:0020002">
    <property type="term" value="C:host cell plasma membrane"/>
    <property type="evidence" value="ECO:0007669"/>
    <property type="project" value="UniProtKB-SubCell"/>
</dbReference>
<dbReference type="GO" id="GO:0016020">
    <property type="term" value="C:membrane"/>
    <property type="evidence" value="ECO:0007669"/>
    <property type="project" value="UniProtKB-UniRule"/>
</dbReference>
<dbReference type="GO" id="GO:0044423">
    <property type="term" value="C:virion component"/>
    <property type="evidence" value="ECO:0007669"/>
    <property type="project" value="UniProtKB-UniRule"/>
</dbReference>
<dbReference type="GO" id="GO:0005525">
    <property type="term" value="F:GTP binding"/>
    <property type="evidence" value="ECO:0007669"/>
    <property type="project" value="UniProtKB-UniRule"/>
</dbReference>
<dbReference type="GO" id="GO:0017124">
    <property type="term" value="F:SH3 domain binding"/>
    <property type="evidence" value="ECO:0007669"/>
    <property type="project" value="UniProtKB-UniRule"/>
</dbReference>
<dbReference type="GO" id="GO:0046776">
    <property type="term" value="P:symbiont-mediated suppression of host antigen processing and presentation of peptide antigen via MHC class I"/>
    <property type="evidence" value="ECO:0007669"/>
    <property type="project" value="UniProtKB-UniRule"/>
</dbReference>
<dbReference type="GO" id="GO:0039505">
    <property type="term" value="P:symbiont-mediated suppression of host antigen processing and presentation of peptide antigen via MHC class II"/>
    <property type="evidence" value="ECO:0007669"/>
    <property type="project" value="UniProtKB-UniRule"/>
</dbReference>
<dbReference type="GO" id="GO:0140321">
    <property type="term" value="P:symbiont-mediated suppression of host autophagy"/>
    <property type="evidence" value="ECO:0007669"/>
    <property type="project" value="UniProtKB-KW"/>
</dbReference>
<dbReference type="Gene3D" id="4.10.890.10">
    <property type="entry name" value="HIV 1 nef anchor domain"/>
    <property type="match status" value="1"/>
</dbReference>
<dbReference type="Gene3D" id="3.30.62.10">
    <property type="entry name" value="Nef Regulatory Factor"/>
    <property type="match status" value="1"/>
</dbReference>
<dbReference type="HAMAP" id="MF_04078">
    <property type="entry name" value="NEF_HIV"/>
    <property type="match status" value="1"/>
</dbReference>
<dbReference type="InterPro" id="IPR027480">
    <property type="entry name" value="HIV-1_Nef_anchor_sf"/>
</dbReference>
<dbReference type="InterPro" id="IPR027481">
    <property type="entry name" value="HIV-1_Nef_core_sf"/>
</dbReference>
<dbReference type="InterPro" id="IPR001558">
    <property type="entry name" value="HIV_Nef"/>
</dbReference>
<dbReference type="Pfam" id="PF00469">
    <property type="entry name" value="F-protein"/>
    <property type="match status" value="1"/>
</dbReference>
<dbReference type="SUPFAM" id="SSF55671">
    <property type="entry name" value="Regulatory factor Nef"/>
    <property type="match status" value="1"/>
</dbReference>
<feature type="initiator methionine" description="Removed; by host" evidence="1">
    <location>
        <position position="1"/>
    </location>
</feature>
<feature type="chain" id="PRO_0000244785" description="Protein Nef" evidence="1">
    <location>
        <begin position="2"/>
        <end position="206"/>
    </location>
</feature>
<feature type="chain" id="PRO_0000244786" description="C-terminal core protein" evidence="1">
    <location>
        <begin position="57"/>
        <end position="206"/>
    </location>
</feature>
<feature type="region of interest" description="Disordered" evidence="2">
    <location>
        <begin position="1"/>
        <end position="46"/>
    </location>
</feature>
<feature type="region of interest" description="Acidic; interacts with host PACS1 and PACS2; stabilizes the interaction of NEF/MHC-I with host AP1M1; necessary for MHC-I internalization" evidence="1">
    <location>
        <begin position="61"/>
        <end position="65"/>
    </location>
</feature>
<feature type="region of interest" description="SH3-binding; interaction with Src family tyrosine kinases" evidence="1">
    <location>
        <begin position="69"/>
        <end position="78"/>
    </location>
</feature>
<feature type="region of interest" description="Mediates dimerization, Nef-PTE1 interaction" evidence="1">
    <location>
        <begin position="108"/>
        <end position="124"/>
    </location>
</feature>
<feature type="region of interest" description="Binding to ATP6V1H" evidence="1">
    <location>
        <begin position="148"/>
        <end position="180"/>
    </location>
</feature>
<feature type="short sequence motif" description="PxxP; stabilizes the interaction of NEF/MHC-I with host AP1M1; necessary for MHC-I internalization" evidence="1">
    <location>
        <begin position="72"/>
        <end position="75"/>
    </location>
</feature>
<feature type="short sequence motif" description="Dileucine internalization motif; necessary for CD4 internalization" evidence="1">
    <location>
        <begin position="164"/>
        <end position="165"/>
    </location>
</feature>
<feature type="short sequence motif" description="Diacidic; necessary for CD4 internalization" evidence="1">
    <location>
        <begin position="174"/>
        <end position="175"/>
    </location>
</feature>
<feature type="site" description="Might play a role in AP-1 recruitment to the Nef-MHC-I complex" evidence="1">
    <location>
        <position position="20"/>
    </location>
</feature>
<feature type="site" description="Cleavage; by viral protease" evidence="1">
    <location>
        <begin position="56"/>
        <end position="57"/>
    </location>
</feature>
<feature type="modified residue" description="Phosphoserine; by host" evidence="1">
    <location>
        <position position="6"/>
    </location>
</feature>
<feature type="lipid moiety-binding region" description="N-myristoyl glycine; by host" evidence="1">
    <location>
        <position position="2"/>
    </location>
</feature>
<protein>
    <recommendedName>
        <fullName evidence="1">Protein Nef</fullName>
    </recommendedName>
    <alternativeName>
        <fullName evidence="1">3'ORF</fullName>
    </alternativeName>
    <alternativeName>
        <fullName evidence="1">Negative factor</fullName>
        <shortName evidence="1">F-protein</shortName>
    </alternativeName>
    <component>
        <recommendedName>
            <fullName evidence="1">C-terminal core protein</fullName>
        </recommendedName>
    </component>
</protein>